<organism>
    <name type="scientific">Haemophilus influenzae (strain ATCC 51907 / DSM 11121 / KW20 / Rd)</name>
    <dbReference type="NCBI Taxonomy" id="71421"/>
    <lineage>
        <taxon>Bacteria</taxon>
        <taxon>Pseudomonadati</taxon>
        <taxon>Pseudomonadota</taxon>
        <taxon>Gammaproteobacteria</taxon>
        <taxon>Pasteurellales</taxon>
        <taxon>Pasteurellaceae</taxon>
        <taxon>Haemophilus</taxon>
    </lineage>
</organism>
<proteinExistence type="inferred from homology"/>
<reference key="1">
    <citation type="journal article" date="1995" name="Science">
        <title>Whole-genome random sequencing and assembly of Haemophilus influenzae Rd.</title>
        <authorList>
            <person name="Fleischmann R.D."/>
            <person name="Adams M.D."/>
            <person name="White O."/>
            <person name="Clayton R.A."/>
            <person name="Kirkness E.F."/>
            <person name="Kerlavage A.R."/>
            <person name="Bult C.J."/>
            <person name="Tomb J.-F."/>
            <person name="Dougherty B.A."/>
            <person name="Merrick J.M."/>
            <person name="McKenney K."/>
            <person name="Sutton G.G."/>
            <person name="FitzHugh W."/>
            <person name="Fields C.A."/>
            <person name="Gocayne J.D."/>
            <person name="Scott J.D."/>
            <person name="Shirley R."/>
            <person name="Liu L.-I."/>
            <person name="Glodek A."/>
            <person name="Kelley J.M."/>
            <person name="Weidman J.F."/>
            <person name="Phillips C.A."/>
            <person name="Spriggs T."/>
            <person name="Hedblom E."/>
            <person name="Cotton M.D."/>
            <person name="Utterback T.R."/>
            <person name="Hanna M.C."/>
            <person name="Nguyen D.T."/>
            <person name="Saudek D.M."/>
            <person name="Brandon R.C."/>
            <person name="Fine L.D."/>
            <person name="Fritchman J.L."/>
            <person name="Fuhrmann J.L."/>
            <person name="Geoghagen N.S.M."/>
            <person name="Gnehm C.L."/>
            <person name="McDonald L.A."/>
            <person name="Small K.V."/>
            <person name="Fraser C.M."/>
            <person name="Smith H.O."/>
            <person name="Venter J.C."/>
        </authorList>
    </citation>
    <scope>NUCLEOTIDE SEQUENCE [LARGE SCALE GENOMIC DNA]</scope>
    <source>
        <strain>ATCC 51907 / DSM 11121 / KW20 / Rd</strain>
    </source>
</reference>
<sequence length="330" mass="37061">MISLESQVLERHISFFDGKSVLFAGGISDSFPQTLASKCSSIQIWSCYFDYARTQSAVNFSVEFQGQADLIVYYWTKNKQEVNFQLIQLLAQASIGQEILIIGENRCGVRSVEKTLSPYGEIAKIDSARRCGLYHFSLQNKPHFELKNFWRTYQHSTLENLTIYSLPGVFSAAELDTGTELLLSTIDNKIKGKVLDLGCGAGVIGSMIKKRTPNAQITMTDIHAMALESARKTLSENQLQGEVYASDVFSDIEGKFDLIISNPPFHDGIDTAYRAVTELITQAKWHLNQGGELRIVANSFLPYPELLRQHFNDYQVLAQTGKFKVYSVKN</sequence>
<accession>P44453</accession>
<evidence type="ECO:0000255" key="1">
    <source>
        <dbReference type="HAMAP-Rule" id="MF_01862"/>
    </source>
</evidence>
<name>RSMC_HAEIN</name>
<protein>
    <recommendedName>
        <fullName evidence="1">Ribosomal RNA small subunit methyltransferase C</fullName>
        <ecNumber evidence="1">2.1.1.172</ecNumber>
    </recommendedName>
    <alternativeName>
        <fullName evidence="1">16S rRNA m2G1207 methyltransferase</fullName>
    </alternativeName>
    <alternativeName>
        <fullName evidence="1">rRNA (guanine-N(2)-)-methyltransferase RsmC</fullName>
    </alternativeName>
</protein>
<feature type="chain" id="PRO_0000097491" description="Ribosomal RNA small subunit methyltransferase C">
    <location>
        <begin position="1"/>
        <end position="330"/>
    </location>
</feature>
<keyword id="KW-0963">Cytoplasm</keyword>
<keyword id="KW-0489">Methyltransferase</keyword>
<keyword id="KW-1185">Reference proteome</keyword>
<keyword id="KW-0698">rRNA processing</keyword>
<keyword id="KW-0949">S-adenosyl-L-methionine</keyword>
<keyword id="KW-0808">Transferase</keyword>
<gene>
    <name evidence="1" type="primary">rsmC</name>
    <name type="ordered locus">HI_0012</name>
</gene>
<dbReference type="EC" id="2.1.1.172" evidence="1"/>
<dbReference type="EMBL" id="L42023">
    <property type="protein sequence ID" value="AAC21690.1"/>
    <property type="molecule type" value="Genomic_DNA"/>
</dbReference>
<dbReference type="PIR" id="B64140">
    <property type="entry name" value="B64140"/>
</dbReference>
<dbReference type="RefSeq" id="NP_438185.1">
    <property type="nucleotide sequence ID" value="NC_000907.1"/>
</dbReference>
<dbReference type="SMR" id="P44453"/>
<dbReference type="STRING" id="71421.HI_0012"/>
<dbReference type="EnsemblBacteria" id="AAC21690">
    <property type="protein sequence ID" value="AAC21690"/>
    <property type="gene ID" value="HI_0012"/>
</dbReference>
<dbReference type="KEGG" id="hin:HI_0012"/>
<dbReference type="PATRIC" id="fig|71421.8.peg.12"/>
<dbReference type="eggNOG" id="COG2813">
    <property type="taxonomic scope" value="Bacteria"/>
</dbReference>
<dbReference type="HOGENOM" id="CLU_049581_0_1_6"/>
<dbReference type="OrthoDB" id="9816072at2"/>
<dbReference type="PhylomeDB" id="P44453"/>
<dbReference type="BioCyc" id="HINF71421:G1GJ1-12-MONOMER"/>
<dbReference type="Proteomes" id="UP000000579">
    <property type="component" value="Chromosome"/>
</dbReference>
<dbReference type="GO" id="GO:0005737">
    <property type="term" value="C:cytoplasm"/>
    <property type="evidence" value="ECO:0007669"/>
    <property type="project" value="UniProtKB-SubCell"/>
</dbReference>
<dbReference type="GO" id="GO:0052914">
    <property type="term" value="F:16S rRNA (guanine(1207)-N(2))-methyltransferase activity"/>
    <property type="evidence" value="ECO:0007669"/>
    <property type="project" value="UniProtKB-EC"/>
</dbReference>
<dbReference type="GO" id="GO:0003676">
    <property type="term" value="F:nucleic acid binding"/>
    <property type="evidence" value="ECO:0007669"/>
    <property type="project" value="InterPro"/>
</dbReference>
<dbReference type="GO" id="GO:0008990">
    <property type="term" value="F:rRNA (guanine-N2-)-methyltransferase activity"/>
    <property type="evidence" value="ECO:0000318"/>
    <property type="project" value="GO_Central"/>
</dbReference>
<dbReference type="GO" id="GO:0070475">
    <property type="term" value="P:rRNA base methylation"/>
    <property type="evidence" value="ECO:0000318"/>
    <property type="project" value="GO_Central"/>
</dbReference>
<dbReference type="CDD" id="cd02440">
    <property type="entry name" value="AdoMet_MTases"/>
    <property type="match status" value="1"/>
</dbReference>
<dbReference type="Gene3D" id="3.40.50.150">
    <property type="entry name" value="Vaccinia Virus protein VP39"/>
    <property type="match status" value="2"/>
</dbReference>
<dbReference type="HAMAP" id="MF_01862">
    <property type="entry name" value="16SrRNA_methyltr_C"/>
    <property type="match status" value="1"/>
</dbReference>
<dbReference type="InterPro" id="IPR002052">
    <property type="entry name" value="DNA_methylase_N6_adenine_CS"/>
</dbReference>
<dbReference type="InterPro" id="IPR013675">
    <property type="entry name" value="Mtase_sm_N"/>
</dbReference>
<dbReference type="InterPro" id="IPR023543">
    <property type="entry name" value="rRNA_ssu_MeTfrase_C"/>
</dbReference>
<dbReference type="InterPro" id="IPR046977">
    <property type="entry name" value="RsmC/RlmG"/>
</dbReference>
<dbReference type="InterPro" id="IPR029063">
    <property type="entry name" value="SAM-dependent_MTases_sf"/>
</dbReference>
<dbReference type="InterPro" id="IPR007848">
    <property type="entry name" value="Small_mtfrase_dom"/>
</dbReference>
<dbReference type="NCBIfam" id="NF007023">
    <property type="entry name" value="PRK09489.1"/>
    <property type="match status" value="1"/>
</dbReference>
<dbReference type="PANTHER" id="PTHR47816">
    <property type="entry name" value="RIBOSOMAL RNA SMALL SUBUNIT METHYLTRANSFERASE C"/>
    <property type="match status" value="1"/>
</dbReference>
<dbReference type="PANTHER" id="PTHR47816:SF4">
    <property type="entry name" value="RIBOSOMAL RNA SMALL SUBUNIT METHYLTRANSFERASE C"/>
    <property type="match status" value="1"/>
</dbReference>
<dbReference type="Pfam" id="PF05175">
    <property type="entry name" value="MTS"/>
    <property type="match status" value="1"/>
</dbReference>
<dbReference type="Pfam" id="PF08468">
    <property type="entry name" value="MTS_N"/>
    <property type="match status" value="1"/>
</dbReference>
<dbReference type="SUPFAM" id="SSF53335">
    <property type="entry name" value="S-adenosyl-L-methionine-dependent methyltransferases"/>
    <property type="match status" value="1"/>
</dbReference>
<comment type="function">
    <text evidence="1">Specifically methylates the guanine in position 1207 of 16S rRNA in the 30S particle.</text>
</comment>
<comment type="catalytic activity">
    <reaction evidence="1">
        <text>guanosine(1207) in 16S rRNA + S-adenosyl-L-methionine = N(2)-methylguanosine(1207) in 16S rRNA + S-adenosyl-L-homocysteine + H(+)</text>
        <dbReference type="Rhea" id="RHEA:42736"/>
        <dbReference type="Rhea" id="RHEA-COMP:10213"/>
        <dbReference type="Rhea" id="RHEA-COMP:10214"/>
        <dbReference type="ChEBI" id="CHEBI:15378"/>
        <dbReference type="ChEBI" id="CHEBI:57856"/>
        <dbReference type="ChEBI" id="CHEBI:59789"/>
        <dbReference type="ChEBI" id="CHEBI:74269"/>
        <dbReference type="ChEBI" id="CHEBI:74481"/>
        <dbReference type="EC" id="2.1.1.172"/>
    </reaction>
</comment>
<comment type="subunit">
    <text evidence="1">Monomer.</text>
</comment>
<comment type="subcellular location">
    <subcellularLocation>
        <location evidence="1">Cytoplasm</location>
    </subcellularLocation>
</comment>
<comment type="similarity">
    <text evidence="1">Belongs to the methyltransferase superfamily. RsmC family.</text>
</comment>